<accession>Q2RIS6</accession>
<protein>
    <recommendedName>
        <fullName evidence="1">Ketol-acid reductoisomerase (NADP(+))</fullName>
        <shortName evidence="1">KARI</shortName>
        <ecNumber evidence="1">1.1.1.86</ecNumber>
    </recommendedName>
    <alternativeName>
        <fullName evidence="1">Acetohydroxy-acid isomeroreductase</fullName>
        <shortName evidence="1">AHIR</shortName>
    </alternativeName>
    <alternativeName>
        <fullName evidence="1">Alpha-keto-beta-hydroxylacyl reductoisomerase</fullName>
    </alternativeName>
    <alternativeName>
        <fullName evidence="1">Ketol-acid reductoisomerase type 1</fullName>
    </alternativeName>
    <alternativeName>
        <fullName evidence="1">Ketol-acid reductoisomerase type I</fullName>
    </alternativeName>
</protein>
<name>ILVC_MOOTA</name>
<sequence length="330" mass="36272">MAVVYYDQDADLNVLKGKKIAVMGYGSQGHSQAQNLKDSGLDVVVGLRPESKSRAAAQAAGLEVKTVAEAAAEADIIQILLPDETQARVYREEIAPYLTGGKVLMFSHGFNIHFNQIVPPADVDVIMVAPKGPGHLVRRTYVEGQGVPALIAIYQDASGKAKEIGLAYAKGIGATRAGVIETTFKEETETDLFGEQAVLCGGTTALVKAGFETLVEAGYQPEIAYFECLHELKLIVDLMYEGGIKYMRYSISDTAEYGDVTRGPRLIDDHVKSTMKSILKEIQDGVFAREWILENQAGRPSFNAFRKKEREHLIEQVGDQLREMMSWLKK</sequence>
<keyword id="KW-0028">Amino-acid biosynthesis</keyword>
<keyword id="KW-0100">Branched-chain amino acid biosynthesis</keyword>
<keyword id="KW-0460">Magnesium</keyword>
<keyword id="KW-0479">Metal-binding</keyword>
<keyword id="KW-0521">NADP</keyword>
<keyword id="KW-0560">Oxidoreductase</keyword>
<evidence type="ECO:0000255" key="1">
    <source>
        <dbReference type="HAMAP-Rule" id="MF_00435"/>
    </source>
</evidence>
<evidence type="ECO:0000255" key="2">
    <source>
        <dbReference type="PROSITE-ProRule" id="PRU01197"/>
    </source>
</evidence>
<evidence type="ECO:0000255" key="3">
    <source>
        <dbReference type="PROSITE-ProRule" id="PRU01198"/>
    </source>
</evidence>
<comment type="function">
    <text evidence="1">Involved in the biosynthesis of branched-chain amino acids (BCAA). Catalyzes an alkyl-migration followed by a ketol-acid reduction of (S)-2-acetolactate (S2AL) to yield (R)-2,3-dihydroxy-isovalerate. In the isomerase reaction, S2AL is rearranged via a Mg-dependent methyl migration to produce 3-hydroxy-3-methyl-2-ketobutyrate (HMKB). In the reductase reaction, this 2-ketoacid undergoes a metal-dependent reduction by NADPH to yield (R)-2,3-dihydroxy-isovalerate.</text>
</comment>
<comment type="catalytic activity">
    <reaction evidence="1">
        <text>(2R)-2,3-dihydroxy-3-methylbutanoate + NADP(+) = (2S)-2-acetolactate + NADPH + H(+)</text>
        <dbReference type="Rhea" id="RHEA:22068"/>
        <dbReference type="ChEBI" id="CHEBI:15378"/>
        <dbReference type="ChEBI" id="CHEBI:49072"/>
        <dbReference type="ChEBI" id="CHEBI:57783"/>
        <dbReference type="ChEBI" id="CHEBI:58349"/>
        <dbReference type="ChEBI" id="CHEBI:58476"/>
        <dbReference type="EC" id="1.1.1.86"/>
    </reaction>
</comment>
<comment type="catalytic activity">
    <reaction evidence="1">
        <text>(2R,3R)-2,3-dihydroxy-3-methylpentanoate + NADP(+) = (S)-2-ethyl-2-hydroxy-3-oxobutanoate + NADPH + H(+)</text>
        <dbReference type="Rhea" id="RHEA:13493"/>
        <dbReference type="ChEBI" id="CHEBI:15378"/>
        <dbReference type="ChEBI" id="CHEBI:49256"/>
        <dbReference type="ChEBI" id="CHEBI:49258"/>
        <dbReference type="ChEBI" id="CHEBI:57783"/>
        <dbReference type="ChEBI" id="CHEBI:58349"/>
        <dbReference type="EC" id="1.1.1.86"/>
    </reaction>
</comment>
<comment type="cofactor">
    <cofactor evidence="1">
        <name>Mg(2+)</name>
        <dbReference type="ChEBI" id="CHEBI:18420"/>
    </cofactor>
    <text evidence="1">Binds 2 magnesium ions per subunit.</text>
</comment>
<comment type="pathway">
    <text evidence="1">Amino-acid biosynthesis; L-isoleucine biosynthesis; L-isoleucine from 2-oxobutanoate: step 2/4.</text>
</comment>
<comment type="pathway">
    <text evidence="1">Amino-acid biosynthesis; L-valine biosynthesis; L-valine from pyruvate: step 2/4.</text>
</comment>
<comment type="similarity">
    <text evidence="1">Belongs to the ketol-acid reductoisomerase family.</text>
</comment>
<proteinExistence type="inferred from homology"/>
<dbReference type="EC" id="1.1.1.86" evidence="1"/>
<dbReference type="EMBL" id="CP000232">
    <property type="protein sequence ID" value="ABC19663.1"/>
    <property type="molecule type" value="Genomic_DNA"/>
</dbReference>
<dbReference type="RefSeq" id="YP_430206.1">
    <property type="nucleotide sequence ID" value="NC_007644.1"/>
</dbReference>
<dbReference type="SMR" id="Q2RIS6"/>
<dbReference type="STRING" id="264732.Moth_1350"/>
<dbReference type="EnsemblBacteria" id="ABC19663">
    <property type="protein sequence ID" value="ABC19663"/>
    <property type="gene ID" value="Moth_1350"/>
</dbReference>
<dbReference type="KEGG" id="mta:Moth_1350"/>
<dbReference type="PATRIC" id="fig|264732.11.peg.1449"/>
<dbReference type="eggNOG" id="COG0059">
    <property type="taxonomic scope" value="Bacteria"/>
</dbReference>
<dbReference type="HOGENOM" id="CLU_033821_0_1_9"/>
<dbReference type="OrthoDB" id="9804088at2"/>
<dbReference type="UniPathway" id="UPA00047">
    <property type="reaction ID" value="UER00056"/>
</dbReference>
<dbReference type="UniPathway" id="UPA00049">
    <property type="reaction ID" value="UER00060"/>
</dbReference>
<dbReference type="GO" id="GO:0005829">
    <property type="term" value="C:cytosol"/>
    <property type="evidence" value="ECO:0007669"/>
    <property type="project" value="TreeGrafter"/>
</dbReference>
<dbReference type="GO" id="GO:0004455">
    <property type="term" value="F:ketol-acid reductoisomerase activity"/>
    <property type="evidence" value="ECO:0007669"/>
    <property type="project" value="UniProtKB-UniRule"/>
</dbReference>
<dbReference type="GO" id="GO:0000287">
    <property type="term" value="F:magnesium ion binding"/>
    <property type="evidence" value="ECO:0007669"/>
    <property type="project" value="UniProtKB-UniRule"/>
</dbReference>
<dbReference type="GO" id="GO:0050661">
    <property type="term" value="F:NADP binding"/>
    <property type="evidence" value="ECO:0007669"/>
    <property type="project" value="InterPro"/>
</dbReference>
<dbReference type="GO" id="GO:0009097">
    <property type="term" value="P:isoleucine biosynthetic process"/>
    <property type="evidence" value="ECO:0007669"/>
    <property type="project" value="UniProtKB-UniRule"/>
</dbReference>
<dbReference type="GO" id="GO:0009099">
    <property type="term" value="P:L-valine biosynthetic process"/>
    <property type="evidence" value="ECO:0007669"/>
    <property type="project" value="UniProtKB-UniRule"/>
</dbReference>
<dbReference type="FunFam" id="3.40.50.720:FF:000023">
    <property type="entry name" value="Ketol-acid reductoisomerase (NADP(+))"/>
    <property type="match status" value="1"/>
</dbReference>
<dbReference type="Gene3D" id="6.10.240.10">
    <property type="match status" value="1"/>
</dbReference>
<dbReference type="Gene3D" id="3.40.50.720">
    <property type="entry name" value="NAD(P)-binding Rossmann-like Domain"/>
    <property type="match status" value="1"/>
</dbReference>
<dbReference type="HAMAP" id="MF_00435">
    <property type="entry name" value="IlvC"/>
    <property type="match status" value="1"/>
</dbReference>
<dbReference type="InterPro" id="IPR008927">
    <property type="entry name" value="6-PGluconate_DH-like_C_sf"/>
</dbReference>
<dbReference type="InterPro" id="IPR013023">
    <property type="entry name" value="KARI"/>
</dbReference>
<dbReference type="InterPro" id="IPR000506">
    <property type="entry name" value="KARI_C"/>
</dbReference>
<dbReference type="InterPro" id="IPR013116">
    <property type="entry name" value="KARI_N"/>
</dbReference>
<dbReference type="InterPro" id="IPR014359">
    <property type="entry name" value="KARI_prok"/>
</dbReference>
<dbReference type="InterPro" id="IPR036291">
    <property type="entry name" value="NAD(P)-bd_dom_sf"/>
</dbReference>
<dbReference type="NCBIfam" id="TIGR00465">
    <property type="entry name" value="ilvC"/>
    <property type="match status" value="1"/>
</dbReference>
<dbReference type="NCBIfam" id="NF004017">
    <property type="entry name" value="PRK05479.1"/>
    <property type="match status" value="1"/>
</dbReference>
<dbReference type="NCBIfam" id="NF009940">
    <property type="entry name" value="PRK13403.1"/>
    <property type="match status" value="1"/>
</dbReference>
<dbReference type="PANTHER" id="PTHR21371">
    <property type="entry name" value="KETOL-ACID REDUCTOISOMERASE, MITOCHONDRIAL"/>
    <property type="match status" value="1"/>
</dbReference>
<dbReference type="PANTHER" id="PTHR21371:SF1">
    <property type="entry name" value="KETOL-ACID REDUCTOISOMERASE, MITOCHONDRIAL"/>
    <property type="match status" value="1"/>
</dbReference>
<dbReference type="Pfam" id="PF01450">
    <property type="entry name" value="KARI_C"/>
    <property type="match status" value="1"/>
</dbReference>
<dbReference type="Pfam" id="PF07991">
    <property type="entry name" value="KARI_N"/>
    <property type="match status" value="1"/>
</dbReference>
<dbReference type="PIRSF" id="PIRSF000116">
    <property type="entry name" value="IlvC_gammaproteo"/>
    <property type="match status" value="1"/>
</dbReference>
<dbReference type="SUPFAM" id="SSF48179">
    <property type="entry name" value="6-phosphogluconate dehydrogenase C-terminal domain-like"/>
    <property type="match status" value="1"/>
</dbReference>
<dbReference type="SUPFAM" id="SSF51735">
    <property type="entry name" value="NAD(P)-binding Rossmann-fold domains"/>
    <property type="match status" value="1"/>
</dbReference>
<dbReference type="PROSITE" id="PS51851">
    <property type="entry name" value="KARI_C"/>
    <property type="match status" value="1"/>
</dbReference>
<dbReference type="PROSITE" id="PS51850">
    <property type="entry name" value="KARI_N"/>
    <property type="match status" value="1"/>
</dbReference>
<gene>
    <name evidence="1" type="primary">ilvC</name>
    <name type="ordered locus">Moth_1350</name>
</gene>
<reference key="1">
    <citation type="journal article" date="2008" name="Environ. Microbiol.">
        <title>The complete genome sequence of Moorella thermoacetica (f. Clostridium thermoaceticum).</title>
        <authorList>
            <person name="Pierce E."/>
            <person name="Xie G."/>
            <person name="Barabote R.D."/>
            <person name="Saunders E."/>
            <person name="Han C.S."/>
            <person name="Detter J.C."/>
            <person name="Richardson P."/>
            <person name="Brettin T.S."/>
            <person name="Das A."/>
            <person name="Ljungdahl L.G."/>
            <person name="Ragsdale S.W."/>
        </authorList>
    </citation>
    <scope>NUCLEOTIDE SEQUENCE [LARGE SCALE GENOMIC DNA]</scope>
    <source>
        <strain>ATCC 39073 / JCM 9320</strain>
    </source>
</reference>
<organism>
    <name type="scientific">Moorella thermoacetica (strain ATCC 39073 / JCM 9320)</name>
    <dbReference type="NCBI Taxonomy" id="264732"/>
    <lineage>
        <taxon>Bacteria</taxon>
        <taxon>Bacillati</taxon>
        <taxon>Bacillota</taxon>
        <taxon>Clostridia</taxon>
        <taxon>Moorellales</taxon>
        <taxon>Moorellaceae</taxon>
        <taxon>Moorella</taxon>
    </lineage>
</organism>
<feature type="chain" id="PRO_0000252768" description="Ketol-acid reductoisomerase (NADP(+))">
    <location>
        <begin position="1"/>
        <end position="330"/>
    </location>
</feature>
<feature type="domain" description="KARI N-terminal Rossmann" evidence="2">
    <location>
        <begin position="1"/>
        <end position="182"/>
    </location>
</feature>
<feature type="domain" description="KARI C-terminal knotted" evidence="3">
    <location>
        <begin position="183"/>
        <end position="328"/>
    </location>
</feature>
<feature type="active site" evidence="1">
    <location>
        <position position="108"/>
    </location>
</feature>
<feature type="binding site" evidence="1">
    <location>
        <begin position="25"/>
        <end position="28"/>
    </location>
    <ligand>
        <name>NADP(+)</name>
        <dbReference type="ChEBI" id="CHEBI:58349"/>
    </ligand>
</feature>
<feature type="binding site" evidence="1">
    <location>
        <position position="48"/>
    </location>
    <ligand>
        <name>NADP(+)</name>
        <dbReference type="ChEBI" id="CHEBI:58349"/>
    </ligand>
</feature>
<feature type="binding site" evidence="1">
    <location>
        <position position="51"/>
    </location>
    <ligand>
        <name>NADP(+)</name>
        <dbReference type="ChEBI" id="CHEBI:58349"/>
    </ligand>
</feature>
<feature type="binding site" evidence="1">
    <location>
        <position position="53"/>
    </location>
    <ligand>
        <name>NADP(+)</name>
        <dbReference type="ChEBI" id="CHEBI:58349"/>
    </ligand>
</feature>
<feature type="binding site" evidence="1">
    <location>
        <begin position="83"/>
        <end position="86"/>
    </location>
    <ligand>
        <name>NADP(+)</name>
        <dbReference type="ChEBI" id="CHEBI:58349"/>
    </ligand>
</feature>
<feature type="binding site" evidence="1">
    <location>
        <position position="134"/>
    </location>
    <ligand>
        <name>NADP(+)</name>
        <dbReference type="ChEBI" id="CHEBI:58349"/>
    </ligand>
</feature>
<feature type="binding site" evidence="1">
    <location>
        <position position="191"/>
    </location>
    <ligand>
        <name>Mg(2+)</name>
        <dbReference type="ChEBI" id="CHEBI:18420"/>
        <label>1</label>
    </ligand>
</feature>
<feature type="binding site" evidence="1">
    <location>
        <position position="191"/>
    </location>
    <ligand>
        <name>Mg(2+)</name>
        <dbReference type="ChEBI" id="CHEBI:18420"/>
        <label>2</label>
    </ligand>
</feature>
<feature type="binding site" evidence="1">
    <location>
        <position position="195"/>
    </location>
    <ligand>
        <name>Mg(2+)</name>
        <dbReference type="ChEBI" id="CHEBI:18420"/>
        <label>1</label>
    </ligand>
</feature>
<feature type="binding site" evidence="1">
    <location>
        <position position="227"/>
    </location>
    <ligand>
        <name>Mg(2+)</name>
        <dbReference type="ChEBI" id="CHEBI:18420"/>
        <label>2</label>
    </ligand>
</feature>
<feature type="binding site" evidence="1">
    <location>
        <position position="231"/>
    </location>
    <ligand>
        <name>Mg(2+)</name>
        <dbReference type="ChEBI" id="CHEBI:18420"/>
        <label>2</label>
    </ligand>
</feature>
<feature type="binding site" evidence="1">
    <location>
        <position position="252"/>
    </location>
    <ligand>
        <name>substrate</name>
    </ligand>
</feature>